<comment type="function">
    <text evidence="1">Catalyzes the attachment of tyrosine to tRNA(Tyr) in a two-step reaction: tyrosine is first activated by ATP to form Tyr-AMP and then transferred to the acceptor end of tRNA(Tyr).</text>
</comment>
<comment type="catalytic activity">
    <reaction evidence="1">
        <text>tRNA(Tyr) + L-tyrosine + ATP = L-tyrosyl-tRNA(Tyr) + AMP + diphosphate + H(+)</text>
        <dbReference type="Rhea" id="RHEA:10220"/>
        <dbReference type="Rhea" id="RHEA-COMP:9706"/>
        <dbReference type="Rhea" id="RHEA-COMP:9707"/>
        <dbReference type="ChEBI" id="CHEBI:15378"/>
        <dbReference type="ChEBI" id="CHEBI:30616"/>
        <dbReference type="ChEBI" id="CHEBI:33019"/>
        <dbReference type="ChEBI" id="CHEBI:58315"/>
        <dbReference type="ChEBI" id="CHEBI:78442"/>
        <dbReference type="ChEBI" id="CHEBI:78536"/>
        <dbReference type="ChEBI" id="CHEBI:456215"/>
        <dbReference type="EC" id="6.1.1.1"/>
    </reaction>
</comment>
<comment type="subunit">
    <text evidence="1">Homodimer.</text>
</comment>
<comment type="subcellular location">
    <subcellularLocation>
        <location evidence="1">Cytoplasm</location>
    </subcellularLocation>
</comment>
<comment type="similarity">
    <text evidence="1">Belongs to the class-I aminoacyl-tRNA synthetase family. TyrS type 1 subfamily.</text>
</comment>
<protein>
    <recommendedName>
        <fullName evidence="1">Tyrosine--tRNA ligase 1</fullName>
        <ecNumber evidence="1">6.1.1.1</ecNumber>
    </recommendedName>
    <alternativeName>
        <fullName evidence="1">Tyrosyl-tRNA synthetase 1</fullName>
        <shortName evidence="1">TyrRS 1</shortName>
    </alternativeName>
</protein>
<organism>
    <name type="scientific">Bacillus anthracis</name>
    <dbReference type="NCBI Taxonomy" id="1392"/>
    <lineage>
        <taxon>Bacteria</taxon>
        <taxon>Bacillati</taxon>
        <taxon>Bacillota</taxon>
        <taxon>Bacilli</taxon>
        <taxon>Bacillales</taxon>
        <taxon>Bacillaceae</taxon>
        <taxon>Bacillus</taxon>
        <taxon>Bacillus cereus group</taxon>
    </lineage>
</organism>
<accession>Q81KS9</accession>
<accession>Q6HS85</accession>
<accession>Q6KLI4</accession>
<gene>
    <name evidence="1" type="primary">tyrS1</name>
    <name type="synonym">tyrS-1</name>
    <name type="ordered locus">BA_4911</name>
    <name type="ordered locus">GBAA_4911</name>
    <name type="ordered locus">BAS4556</name>
</gene>
<dbReference type="EC" id="6.1.1.1" evidence="1"/>
<dbReference type="EMBL" id="AE016879">
    <property type="protein sequence ID" value="AAP28595.1"/>
    <property type="molecule type" value="Genomic_DNA"/>
</dbReference>
<dbReference type="EMBL" id="AE017334">
    <property type="protein sequence ID" value="AAT34029.1"/>
    <property type="molecule type" value="Genomic_DNA"/>
</dbReference>
<dbReference type="EMBL" id="AE017225">
    <property type="protein sequence ID" value="AAT56853.1"/>
    <property type="molecule type" value="Genomic_DNA"/>
</dbReference>
<dbReference type="RefSeq" id="NP_847109.1">
    <property type="nucleotide sequence ID" value="NC_003997.3"/>
</dbReference>
<dbReference type="RefSeq" id="YP_030803.1">
    <property type="nucleotide sequence ID" value="NC_005945.1"/>
</dbReference>
<dbReference type="SMR" id="Q81KS9"/>
<dbReference type="STRING" id="261594.GBAA_4911"/>
<dbReference type="DNASU" id="1084086"/>
<dbReference type="KEGG" id="ban:BA_4911"/>
<dbReference type="KEGG" id="banh:HYU01_23925"/>
<dbReference type="KEGG" id="bar:GBAA_4911"/>
<dbReference type="KEGG" id="bat:BAS4556"/>
<dbReference type="PATRIC" id="fig|198094.11.peg.4872"/>
<dbReference type="eggNOG" id="COG0162">
    <property type="taxonomic scope" value="Bacteria"/>
</dbReference>
<dbReference type="HOGENOM" id="CLU_024003_0_3_9"/>
<dbReference type="OMA" id="YMMAKDS"/>
<dbReference type="OrthoDB" id="9804243at2"/>
<dbReference type="Proteomes" id="UP000000427">
    <property type="component" value="Chromosome"/>
</dbReference>
<dbReference type="Proteomes" id="UP000000594">
    <property type="component" value="Chromosome"/>
</dbReference>
<dbReference type="GO" id="GO:0005829">
    <property type="term" value="C:cytosol"/>
    <property type="evidence" value="ECO:0007669"/>
    <property type="project" value="TreeGrafter"/>
</dbReference>
<dbReference type="GO" id="GO:0005524">
    <property type="term" value="F:ATP binding"/>
    <property type="evidence" value="ECO:0007669"/>
    <property type="project" value="UniProtKB-UniRule"/>
</dbReference>
<dbReference type="GO" id="GO:0003723">
    <property type="term" value="F:RNA binding"/>
    <property type="evidence" value="ECO:0007669"/>
    <property type="project" value="UniProtKB-KW"/>
</dbReference>
<dbReference type="GO" id="GO:0004831">
    <property type="term" value="F:tyrosine-tRNA ligase activity"/>
    <property type="evidence" value="ECO:0007669"/>
    <property type="project" value="UniProtKB-UniRule"/>
</dbReference>
<dbReference type="GO" id="GO:0006437">
    <property type="term" value="P:tyrosyl-tRNA aminoacylation"/>
    <property type="evidence" value="ECO:0007669"/>
    <property type="project" value="UniProtKB-UniRule"/>
</dbReference>
<dbReference type="CDD" id="cd00165">
    <property type="entry name" value="S4"/>
    <property type="match status" value="1"/>
</dbReference>
<dbReference type="CDD" id="cd00395">
    <property type="entry name" value="Tyr_Trp_RS_core"/>
    <property type="match status" value="1"/>
</dbReference>
<dbReference type="FunFam" id="1.10.240.10:FF:000001">
    <property type="entry name" value="Tyrosine--tRNA ligase"/>
    <property type="match status" value="1"/>
</dbReference>
<dbReference type="FunFam" id="3.10.290.10:FF:000012">
    <property type="entry name" value="Tyrosine--tRNA ligase"/>
    <property type="match status" value="1"/>
</dbReference>
<dbReference type="FunFam" id="3.40.50.620:FF:000008">
    <property type="entry name" value="Tyrosine--tRNA ligase"/>
    <property type="match status" value="1"/>
</dbReference>
<dbReference type="Gene3D" id="3.40.50.620">
    <property type="entry name" value="HUPs"/>
    <property type="match status" value="1"/>
</dbReference>
<dbReference type="Gene3D" id="3.10.290.10">
    <property type="entry name" value="RNA-binding S4 domain"/>
    <property type="match status" value="1"/>
</dbReference>
<dbReference type="Gene3D" id="1.10.240.10">
    <property type="entry name" value="Tyrosyl-Transfer RNA Synthetase"/>
    <property type="match status" value="1"/>
</dbReference>
<dbReference type="HAMAP" id="MF_02006">
    <property type="entry name" value="Tyr_tRNA_synth_type1"/>
    <property type="match status" value="1"/>
</dbReference>
<dbReference type="InterPro" id="IPR001412">
    <property type="entry name" value="aa-tRNA-synth_I_CS"/>
</dbReference>
<dbReference type="InterPro" id="IPR002305">
    <property type="entry name" value="aa-tRNA-synth_Ic"/>
</dbReference>
<dbReference type="InterPro" id="IPR014729">
    <property type="entry name" value="Rossmann-like_a/b/a_fold"/>
</dbReference>
<dbReference type="InterPro" id="IPR002942">
    <property type="entry name" value="S4_RNA-bd"/>
</dbReference>
<dbReference type="InterPro" id="IPR036986">
    <property type="entry name" value="S4_RNA-bd_sf"/>
</dbReference>
<dbReference type="InterPro" id="IPR054608">
    <property type="entry name" value="SYY-like_C"/>
</dbReference>
<dbReference type="InterPro" id="IPR002307">
    <property type="entry name" value="Tyr-tRNA-ligase"/>
</dbReference>
<dbReference type="InterPro" id="IPR024088">
    <property type="entry name" value="Tyr-tRNA-ligase_bac-type"/>
</dbReference>
<dbReference type="InterPro" id="IPR024107">
    <property type="entry name" value="Tyr-tRNA-ligase_bac_1"/>
</dbReference>
<dbReference type="NCBIfam" id="TIGR00234">
    <property type="entry name" value="tyrS"/>
    <property type="match status" value="1"/>
</dbReference>
<dbReference type="PANTHER" id="PTHR11766:SF0">
    <property type="entry name" value="TYROSINE--TRNA LIGASE, MITOCHONDRIAL"/>
    <property type="match status" value="1"/>
</dbReference>
<dbReference type="PANTHER" id="PTHR11766">
    <property type="entry name" value="TYROSYL-TRNA SYNTHETASE"/>
    <property type="match status" value="1"/>
</dbReference>
<dbReference type="Pfam" id="PF22421">
    <property type="entry name" value="SYY_C-terminal"/>
    <property type="match status" value="1"/>
</dbReference>
<dbReference type="Pfam" id="PF00579">
    <property type="entry name" value="tRNA-synt_1b"/>
    <property type="match status" value="1"/>
</dbReference>
<dbReference type="PRINTS" id="PR01040">
    <property type="entry name" value="TRNASYNTHTYR"/>
</dbReference>
<dbReference type="SMART" id="SM00363">
    <property type="entry name" value="S4"/>
    <property type="match status" value="1"/>
</dbReference>
<dbReference type="SUPFAM" id="SSF55174">
    <property type="entry name" value="Alpha-L RNA-binding motif"/>
    <property type="match status" value="1"/>
</dbReference>
<dbReference type="SUPFAM" id="SSF52374">
    <property type="entry name" value="Nucleotidylyl transferase"/>
    <property type="match status" value="1"/>
</dbReference>
<dbReference type="PROSITE" id="PS00178">
    <property type="entry name" value="AA_TRNA_LIGASE_I"/>
    <property type="match status" value="1"/>
</dbReference>
<dbReference type="PROSITE" id="PS50889">
    <property type="entry name" value="S4"/>
    <property type="match status" value="1"/>
</dbReference>
<sequence>MGILQDLEFRGLINQQTDAEGLEQLLEKESVKLYCGFDPTADSLHIGHMLPVLMLRRFQLAGHQPIALVGGGTGMIGDPSGKKAERTLNTKDTVAYYTESIKNQLSNFLEFENVENPATMANNYDWLGNLDVISFLRDIGKNFGLNYMLAKDTVASRLETGISFTEFSYMILQSYDFLNLYQHHNCRLQIGGSDQWGNITAGLELIRKSEEDAKAFGLTIPLVTKSDGTKFGKTEGGAIWLDPEKTTPYEFYQFWINTDDRDVVKYLKYFTFLSHEEILELEKQVAEAPEKRAAQKALGAEMTKLVHGEEALEQAIKISAALFSGSVAELTASEIEQGFKDVPSVERTAEDTVLIDLLVESKISPSKRQAREDVTNGAIYVNGERTQALDYVVTEKDRIEGKFTIIRRGKKKYFLIRY</sequence>
<keyword id="KW-0030">Aminoacyl-tRNA synthetase</keyword>
<keyword id="KW-0067">ATP-binding</keyword>
<keyword id="KW-0963">Cytoplasm</keyword>
<keyword id="KW-0436">Ligase</keyword>
<keyword id="KW-0547">Nucleotide-binding</keyword>
<keyword id="KW-0648">Protein biosynthesis</keyword>
<keyword id="KW-1185">Reference proteome</keyword>
<keyword id="KW-0694">RNA-binding</keyword>
<evidence type="ECO:0000255" key="1">
    <source>
        <dbReference type="HAMAP-Rule" id="MF_02006"/>
    </source>
</evidence>
<name>SYY1_BACAN</name>
<feature type="chain" id="PRO_0000234667" description="Tyrosine--tRNA ligase 1">
    <location>
        <begin position="1"/>
        <end position="418"/>
    </location>
</feature>
<feature type="domain" description="S4 RNA-binding" evidence="1">
    <location>
        <begin position="352"/>
        <end position="418"/>
    </location>
</feature>
<feature type="short sequence motif" description="'HIGH' region">
    <location>
        <begin position="39"/>
        <end position="48"/>
    </location>
</feature>
<feature type="short sequence motif" description="'KMSKS' region">
    <location>
        <begin position="230"/>
        <end position="234"/>
    </location>
</feature>
<feature type="binding site" evidence="1">
    <location>
        <position position="34"/>
    </location>
    <ligand>
        <name>L-tyrosine</name>
        <dbReference type="ChEBI" id="CHEBI:58315"/>
    </ligand>
</feature>
<feature type="binding site" evidence="1">
    <location>
        <position position="169"/>
    </location>
    <ligand>
        <name>L-tyrosine</name>
        <dbReference type="ChEBI" id="CHEBI:58315"/>
    </ligand>
</feature>
<feature type="binding site" evidence="1">
    <location>
        <position position="173"/>
    </location>
    <ligand>
        <name>L-tyrosine</name>
        <dbReference type="ChEBI" id="CHEBI:58315"/>
    </ligand>
</feature>
<feature type="binding site" evidence="1">
    <location>
        <position position="233"/>
    </location>
    <ligand>
        <name>ATP</name>
        <dbReference type="ChEBI" id="CHEBI:30616"/>
    </ligand>
</feature>
<proteinExistence type="inferred from homology"/>
<reference key="1">
    <citation type="journal article" date="2003" name="Nature">
        <title>The genome sequence of Bacillus anthracis Ames and comparison to closely related bacteria.</title>
        <authorList>
            <person name="Read T.D."/>
            <person name="Peterson S.N."/>
            <person name="Tourasse N.J."/>
            <person name="Baillie L.W."/>
            <person name="Paulsen I.T."/>
            <person name="Nelson K.E."/>
            <person name="Tettelin H."/>
            <person name="Fouts D.E."/>
            <person name="Eisen J.A."/>
            <person name="Gill S.R."/>
            <person name="Holtzapple E.K."/>
            <person name="Okstad O.A."/>
            <person name="Helgason E."/>
            <person name="Rilstone J."/>
            <person name="Wu M."/>
            <person name="Kolonay J.F."/>
            <person name="Beanan M.J."/>
            <person name="Dodson R.J."/>
            <person name="Brinkac L.M."/>
            <person name="Gwinn M.L."/>
            <person name="DeBoy R.T."/>
            <person name="Madpu R."/>
            <person name="Daugherty S.C."/>
            <person name="Durkin A.S."/>
            <person name="Haft D.H."/>
            <person name="Nelson W.C."/>
            <person name="Peterson J.D."/>
            <person name="Pop M."/>
            <person name="Khouri H.M."/>
            <person name="Radune D."/>
            <person name="Benton J.L."/>
            <person name="Mahamoud Y."/>
            <person name="Jiang L."/>
            <person name="Hance I.R."/>
            <person name="Weidman J.F."/>
            <person name="Berry K.J."/>
            <person name="Plaut R.D."/>
            <person name="Wolf A.M."/>
            <person name="Watkins K.L."/>
            <person name="Nierman W.C."/>
            <person name="Hazen A."/>
            <person name="Cline R.T."/>
            <person name="Redmond C."/>
            <person name="Thwaite J.E."/>
            <person name="White O."/>
            <person name="Salzberg S.L."/>
            <person name="Thomason B."/>
            <person name="Friedlander A.M."/>
            <person name="Koehler T.M."/>
            <person name="Hanna P.C."/>
            <person name="Kolstoe A.-B."/>
            <person name="Fraser C.M."/>
        </authorList>
    </citation>
    <scope>NUCLEOTIDE SEQUENCE [LARGE SCALE GENOMIC DNA]</scope>
    <source>
        <strain>Ames / isolate Porton</strain>
    </source>
</reference>
<reference key="2">
    <citation type="journal article" date="2009" name="J. Bacteriol.">
        <title>The complete genome sequence of Bacillus anthracis Ames 'Ancestor'.</title>
        <authorList>
            <person name="Ravel J."/>
            <person name="Jiang L."/>
            <person name="Stanley S.T."/>
            <person name="Wilson M.R."/>
            <person name="Decker R.S."/>
            <person name="Read T.D."/>
            <person name="Worsham P."/>
            <person name="Keim P.S."/>
            <person name="Salzberg S.L."/>
            <person name="Fraser-Liggett C.M."/>
            <person name="Rasko D.A."/>
        </authorList>
    </citation>
    <scope>NUCLEOTIDE SEQUENCE [LARGE SCALE GENOMIC DNA]</scope>
    <source>
        <strain>Ames ancestor</strain>
    </source>
</reference>
<reference key="3">
    <citation type="submission" date="2004-01" db="EMBL/GenBank/DDBJ databases">
        <title>Complete genome sequence of Bacillus anthracis Sterne.</title>
        <authorList>
            <person name="Brettin T.S."/>
            <person name="Bruce D."/>
            <person name="Challacombe J.F."/>
            <person name="Gilna P."/>
            <person name="Han C."/>
            <person name="Hill K."/>
            <person name="Hitchcock P."/>
            <person name="Jackson P."/>
            <person name="Keim P."/>
            <person name="Longmire J."/>
            <person name="Lucas S."/>
            <person name="Okinaka R."/>
            <person name="Richardson P."/>
            <person name="Rubin E."/>
            <person name="Tice H."/>
        </authorList>
    </citation>
    <scope>NUCLEOTIDE SEQUENCE [LARGE SCALE GENOMIC DNA]</scope>
    <source>
        <strain>Sterne</strain>
    </source>
</reference>